<gene>
    <name evidence="1" type="primary">pth</name>
    <name type="ordered locus">CCA_00819</name>
</gene>
<reference key="1">
    <citation type="journal article" date="2003" name="Nucleic Acids Res.">
        <title>Genome sequence of Chlamydophila caviae (Chlamydia psittaci GPIC): examining the role of niche-specific genes in the evolution of the Chlamydiaceae.</title>
        <authorList>
            <person name="Read T.D."/>
            <person name="Myers G.S.A."/>
            <person name="Brunham R.C."/>
            <person name="Nelson W.C."/>
            <person name="Paulsen I.T."/>
            <person name="Heidelberg J.F."/>
            <person name="Holtzapple E.K."/>
            <person name="Khouri H.M."/>
            <person name="Federova N.B."/>
            <person name="Carty H.A."/>
            <person name="Umayam L.A."/>
            <person name="Haft D.H."/>
            <person name="Peterson J.D."/>
            <person name="Beanan M.J."/>
            <person name="White O."/>
            <person name="Salzberg S.L."/>
            <person name="Hsia R.-C."/>
            <person name="McClarty G."/>
            <person name="Rank R.G."/>
            <person name="Bavoil P.M."/>
            <person name="Fraser C.M."/>
        </authorList>
    </citation>
    <scope>NUCLEOTIDE SEQUENCE [LARGE SCALE GENOMIC DNA]</scope>
    <source>
        <strain>ATCC VR-813 / DSM 19441 / 03DC25 / GPIC</strain>
    </source>
</reference>
<accession>Q821W6</accession>
<organism>
    <name type="scientific">Chlamydia caviae (strain ATCC VR-813 / DSM 19441 / 03DC25 / GPIC)</name>
    <name type="common">Chlamydophila caviae</name>
    <dbReference type="NCBI Taxonomy" id="227941"/>
    <lineage>
        <taxon>Bacteria</taxon>
        <taxon>Pseudomonadati</taxon>
        <taxon>Chlamydiota</taxon>
        <taxon>Chlamydiia</taxon>
        <taxon>Chlamydiales</taxon>
        <taxon>Chlamydiaceae</taxon>
        <taxon>Chlamydia/Chlamydophila group</taxon>
        <taxon>Chlamydia</taxon>
    </lineage>
</organism>
<sequence>MTMLIVAIGNPGRQYTWTRHNIGFLCADKLLQGFPEAQFKEARKLFSDIAKVESPQGSMVFIKPRTYVNLSGKAVSAVKEYYGIPIDRILVLADDVNHPFGNVRLRQNAGGGGHKGIKSITQSLGSNDYWQLRLGIGRPQREDIELSDFVLGQFTEEEQIGIQSLFIEASALFSQWCSGTQTA</sequence>
<name>PTH_CHLCV</name>
<evidence type="ECO:0000255" key="1">
    <source>
        <dbReference type="HAMAP-Rule" id="MF_00083"/>
    </source>
</evidence>
<keyword id="KW-0963">Cytoplasm</keyword>
<keyword id="KW-0378">Hydrolase</keyword>
<keyword id="KW-0694">RNA-binding</keyword>
<keyword id="KW-0820">tRNA-binding</keyword>
<dbReference type="EC" id="3.1.1.29" evidence="1"/>
<dbReference type="EMBL" id="AE015925">
    <property type="protein sequence ID" value="AAP05560.1"/>
    <property type="molecule type" value="Genomic_DNA"/>
</dbReference>
<dbReference type="RefSeq" id="WP_011006774.1">
    <property type="nucleotide sequence ID" value="NC_003361.3"/>
</dbReference>
<dbReference type="SMR" id="Q821W6"/>
<dbReference type="STRING" id="227941.CCA_00819"/>
<dbReference type="KEGG" id="cca:CCA_00819"/>
<dbReference type="eggNOG" id="COG0193">
    <property type="taxonomic scope" value="Bacteria"/>
</dbReference>
<dbReference type="HOGENOM" id="CLU_062456_4_1_0"/>
<dbReference type="OrthoDB" id="9800507at2"/>
<dbReference type="Proteomes" id="UP000002193">
    <property type="component" value="Chromosome"/>
</dbReference>
<dbReference type="GO" id="GO:0005737">
    <property type="term" value="C:cytoplasm"/>
    <property type="evidence" value="ECO:0007669"/>
    <property type="project" value="UniProtKB-SubCell"/>
</dbReference>
<dbReference type="GO" id="GO:0004045">
    <property type="term" value="F:peptidyl-tRNA hydrolase activity"/>
    <property type="evidence" value="ECO:0007669"/>
    <property type="project" value="UniProtKB-UniRule"/>
</dbReference>
<dbReference type="GO" id="GO:0000049">
    <property type="term" value="F:tRNA binding"/>
    <property type="evidence" value="ECO:0007669"/>
    <property type="project" value="UniProtKB-UniRule"/>
</dbReference>
<dbReference type="GO" id="GO:0006515">
    <property type="term" value="P:protein quality control for misfolded or incompletely synthesized proteins"/>
    <property type="evidence" value="ECO:0007669"/>
    <property type="project" value="UniProtKB-UniRule"/>
</dbReference>
<dbReference type="GO" id="GO:0072344">
    <property type="term" value="P:rescue of stalled ribosome"/>
    <property type="evidence" value="ECO:0007669"/>
    <property type="project" value="UniProtKB-UniRule"/>
</dbReference>
<dbReference type="CDD" id="cd00462">
    <property type="entry name" value="PTH"/>
    <property type="match status" value="1"/>
</dbReference>
<dbReference type="Gene3D" id="3.40.50.1470">
    <property type="entry name" value="Peptidyl-tRNA hydrolase"/>
    <property type="match status" value="1"/>
</dbReference>
<dbReference type="HAMAP" id="MF_00083">
    <property type="entry name" value="Pept_tRNA_hydro_bact"/>
    <property type="match status" value="1"/>
</dbReference>
<dbReference type="InterPro" id="IPR001328">
    <property type="entry name" value="Pept_tRNA_hydro"/>
</dbReference>
<dbReference type="InterPro" id="IPR018171">
    <property type="entry name" value="Pept_tRNA_hydro_CS"/>
</dbReference>
<dbReference type="InterPro" id="IPR036416">
    <property type="entry name" value="Pept_tRNA_hydro_sf"/>
</dbReference>
<dbReference type="NCBIfam" id="TIGR00447">
    <property type="entry name" value="pth"/>
    <property type="match status" value="1"/>
</dbReference>
<dbReference type="PANTHER" id="PTHR17224">
    <property type="entry name" value="PEPTIDYL-TRNA HYDROLASE"/>
    <property type="match status" value="1"/>
</dbReference>
<dbReference type="PANTHER" id="PTHR17224:SF1">
    <property type="entry name" value="PEPTIDYL-TRNA HYDROLASE"/>
    <property type="match status" value="1"/>
</dbReference>
<dbReference type="Pfam" id="PF01195">
    <property type="entry name" value="Pept_tRNA_hydro"/>
    <property type="match status" value="1"/>
</dbReference>
<dbReference type="SUPFAM" id="SSF53178">
    <property type="entry name" value="Peptidyl-tRNA hydrolase-like"/>
    <property type="match status" value="1"/>
</dbReference>
<dbReference type="PROSITE" id="PS01195">
    <property type="entry name" value="PEPT_TRNA_HYDROL_1"/>
    <property type="match status" value="1"/>
</dbReference>
<feature type="chain" id="PRO_0000187716" description="Peptidyl-tRNA hydrolase">
    <location>
        <begin position="1"/>
        <end position="183"/>
    </location>
</feature>
<feature type="active site" description="Proton acceptor" evidence="1">
    <location>
        <position position="20"/>
    </location>
</feature>
<feature type="binding site" evidence="1">
    <location>
        <position position="15"/>
    </location>
    <ligand>
        <name>tRNA</name>
        <dbReference type="ChEBI" id="CHEBI:17843"/>
    </ligand>
</feature>
<feature type="binding site" evidence="1">
    <location>
        <position position="67"/>
    </location>
    <ligand>
        <name>tRNA</name>
        <dbReference type="ChEBI" id="CHEBI:17843"/>
    </ligand>
</feature>
<feature type="binding site" evidence="1">
    <location>
        <position position="69"/>
    </location>
    <ligand>
        <name>tRNA</name>
        <dbReference type="ChEBI" id="CHEBI:17843"/>
    </ligand>
</feature>
<feature type="site" description="Discriminates between blocked and unblocked aminoacyl-tRNA" evidence="1">
    <location>
        <position position="10"/>
    </location>
</feature>
<feature type="site" description="Stabilizes the basic form of H active site to accept a proton" evidence="1">
    <location>
        <position position="94"/>
    </location>
</feature>
<protein>
    <recommendedName>
        <fullName evidence="1">Peptidyl-tRNA hydrolase</fullName>
        <shortName evidence="1">Pth</shortName>
        <ecNumber evidence="1">3.1.1.29</ecNumber>
    </recommendedName>
</protein>
<comment type="function">
    <text evidence="1">Hydrolyzes ribosome-free peptidyl-tRNAs (with 1 or more amino acids incorporated), which drop off the ribosome during protein synthesis, or as a result of ribosome stalling.</text>
</comment>
<comment type="function">
    <text evidence="1">Catalyzes the release of premature peptidyl moieties from peptidyl-tRNA molecules trapped in stalled 50S ribosomal subunits, and thus maintains levels of free tRNAs and 50S ribosomes.</text>
</comment>
<comment type="catalytic activity">
    <reaction evidence="1">
        <text>an N-acyl-L-alpha-aminoacyl-tRNA + H2O = an N-acyl-L-amino acid + a tRNA + H(+)</text>
        <dbReference type="Rhea" id="RHEA:54448"/>
        <dbReference type="Rhea" id="RHEA-COMP:10123"/>
        <dbReference type="Rhea" id="RHEA-COMP:13883"/>
        <dbReference type="ChEBI" id="CHEBI:15377"/>
        <dbReference type="ChEBI" id="CHEBI:15378"/>
        <dbReference type="ChEBI" id="CHEBI:59874"/>
        <dbReference type="ChEBI" id="CHEBI:78442"/>
        <dbReference type="ChEBI" id="CHEBI:138191"/>
        <dbReference type="EC" id="3.1.1.29"/>
    </reaction>
</comment>
<comment type="subunit">
    <text evidence="1">Monomer.</text>
</comment>
<comment type="subcellular location">
    <subcellularLocation>
        <location evidence="1">Cytoplasm</location>
    </subcellularLocation>
</comment>
<comment type="similarity">
    <text evidence="1">Belongs to the PTH family.</text>
</comment>
<proteinExistence type="inferred from homology"/>